<protein>
    <recommendedName>
        <fullName evidence="1">Small ribosomal subunit protein bS18</fullName>
    </recommendedName>
    <alternativeName>
        <fullName evidence="2">30S ribosomal protein S18</fullName>
    </alternativeName>
</protein>
<comment type="function">
    <text evidence="1">Binds as a heterodimer with protein bS6 to the central domain of the 16S rRNA, where it helps stabilize the platform of the 30S subunit.</text>
</comment>
<comment type="subunit">
    <text evidence="1">Part of the 30S ribosomal subunit. Forms a tight heterodimer with protein bS6.</text>
</comment>
<comment type="similarity">
    <text evidence="1">Belongs to the bacterial ribosomal protein bS18 family.</text>
</comment>
<dbReference type="EMBL" id="CP000260">
    <property type="protein sequence ID" value="ABF34685.1"/>
    <property type="molecule type" value="Genomic_DNA"/>
</dbReference>
<dbReference type="RefSeq" id="WP_002983142.1">
    <property type="nucleotide sequence ID" value="NZ_CVUH01000011.1"/>
</dbReference>
<dbReference type="SMR" id="Q1JF74"/>
<dbReference type="GeneID" id="93826879"/>
<dbReference type="KEGG" id="sph:MGAS10270_Spy1620"/>
<dbReference type="HOGENOM" id="CLU_148710_2_2_9"/>
<dbReference type="Proteomes" id="UP000002436">
    <property type="component" value="Chromosome"/>
</dbReference>
<dbReference type="GO" id="GO:0022627">
    <property type="term" value="C:cytosolic small ribosomal subunit"/>
    <property type="evidence" value="ECO:0007669"/>
    <property type="project" value="TreeGrafter"/>
</dbReference>
<dbReference type="GO" id="GO:0070181">
    <property type="term" value="F:small ribosomal subunit rRNA binding"/>
    <property type="evidence" value="ECO:0007669"/>
    <property type="project" value="TreeGrafter"/>
</dbReference>
<dbReference type="GO" id="GO:0003735">
    <property type="term" value="F:structural constituent of ribosome"/>
    <property type="evidence" value="ECO:0007669"/>
    <property type="project" value="InterPro"/>
</dbReference>
<dbReference type="GO" id="GO:0006412">
    <property type="term" value="P:translation"/>
    <property type="evidence" value="ECO:0007669"/>
    <property type="project" value="UniProtKB-UniRule"/>
</dbReference>
<dbReference type="FunFam" id="4.10.640.10:FF:000003">
    <property type="entry name" value="30S ribosomal protein S18"/>
    <property type="match status" value="1"/>
</dbReference>
<dbReference type="Gene3D" id="4.10.640.10">
    <property type="entry name" value="Ribosomal protein S18"/>
    <property type="match status" value="1"/>
</dbReference>
<dbReference type="HAMAP" id="MF_00270">
    <property type="entry name" value="Ribosomal_bS18"/>
    <property type="match status" value="1"/>
</dbReference>
<dbReference type="InterPro" id="IPR001648">
    <property type="entry name" value="Ribosomal_bS18"/>
</dbReference>
<dbReference type="InterPro" id="IPR018275">
    <property type="entry name" value="Ribosomal_bS18_CS"/>
</dbReference>
<dbReference type="InterPro" id="IPR036870">
    <property type="entry name" value="Ribosomal_bS18_sf"/>
</dbReference>
<dbReference type="NCBIfam" id="TIGR00165">
    <property type="entry name" value="S18"/>
    <property type="match status" value="1"/>
</dbReference>
<dbReference type="PANTHER" id="PTHR13479">
    <property type="entry name" value="30S RIBOSOMAL PROTEIN S18"/>
    <property type="match status" value="1"/>
</dbReference>
<dbReference type="PANTHER" id="PTHR13479:SF40">
    <property type="entry name" value="SMALL RIBOSOMAL SUBUNIT PROTEIN BS18M"/>
    <property type="match status" value="1"/>
</dbReference>
<dbReference type="Pfam" id="PF01084">
    <property type="entry name" value="Ribosomal_S18"/>
    <property type="match status" value="1"/>
</dbReference>
<dbReference type="PRINTS" id="PR00974">
    <property type="entry name" value="RIBOSOMALS18"/>
</dbReference>
<dbReference type="SUPFAM" id="SSF46911">
    <property type="entry name" value="Ribosomal protein S18"/>
    <property type="match status" value="1"/>
</dbReference>
<dbReference type="PROSITE" id="PS00057">
    <property type="entry name" value="RIBOSOMAL_S18"/>
    <property type="match status" value="1"/>
</dbReference>
<accession>Q1JF74</accession>
<proteinExistence type="inferred from homology"/>
<sequence length="79" mass="9204">MAQQRRGGFKRRKKVDFIAANKIEYVDYKDTELLSRFVSERGKILPRRVTGTSAKNQRKVTTAIKRARVMALMPYVNED</sequence>
<feature type="chain" id="PRO_1000003628" description="Small ribosomal subunit protein bS18">
    <location>
        <begin position="1"/>
        <end position="79"/>
    </location>
</feature>
<evidence type="ECO:0000255" key="1">
    <source>
        <dbReference type="HAMAP-Rule" id="MF_00270"/>
    </source>
</evidence>
<evidence type="ECO:0000305" key="2"/>
<gene>
    <name evidence="1" type="primary">rpsR</name>
    <name type="ordered locus">MGAS10270_Spy1620</name>
</gene>
<name>RS18_STRPD</name>
<reference key="1">
    <citation type="journal article" date="2006" name="Proc. Natl. Acad. Sci. U.S.A.">
        <title>Molecular genetic anatomy of inter- and intraserotype variation in the human bacterial pathogen group A Streptococcus.</title>
        <authorList>
            <person name="Beres S.B."/>
            <person name="Richter E.W."/>
            <person name="Nagiec M.J."/>
            <person name="Sumby P."/>
            <person name="Porcella S.F."/>
            <person name="DeLeo F.R."/>
            <person name="Musser J.M."/>
        </authorList>
    </citation>
    <scope>NUCLEOTIDE SEQUENCE [LARGE SCALE GENOMIC DNA]</scope>
    <source>
        <strain>MGAS10270</strain>
    </source>
</reference>
<keyword id="KW-0687">Ribonucleoprotein</keyword>
<keyword id="KW-0689">Ribosomal protein</keyword>
<keyword id="KW-0694">RNA-binding</keyword>
<keyword id="KW-0699">rRNA-binding</keyword>
<organism>
    <name type="scientific">Streptococcus pyogenes serotype M2 (strain MGAS10270)</name>
    <dbReference type="NCBI Taxonomy" id="370552"/>
    <lineage>
        <taxon>Bacteria</taxon>
        <taxon>Bacillati</taxon>
        <taxon>Bacillota</taxon>
        <taxon>Bacilli</taxon>
        <taxon>Lactobacillales</taxon>
        <taxon>Streptococcaceae</taxon>
        <taxon>Streptococcus</taxon>
    </lineage>
</organism>